<gene>
    <name evidence="2" type="primary">NAXE</name>
    <name evidence="3" type="synonym">AIBP</name>
    <name evidence="3" type="synonym">APOA1BP</name>
</gene>
<dbReference type="EC" id="5.1.99.6" evidence="2"/>
<dbReference type="EMBL" id="AY528250">
    <property type="protein sequence ID" value="AAS20598.1"/>
    <property type="molecule type" value="mRNA"/>
</dbReference>
<dbReference type="EMBL" id="BC114830">
    <property type="protein sequence ID" value="AAI14831.1"/>
    <property type="molecule type" value="mRNA"/>
</dbReference>
<dbReference type="RefSeq" id="NP_991365.1">
    <property type="nucleotide sequence ID" value="NM_205796.3"/>
</dbReference>
<dbReference type="RefSeq" id="XP_005203675.1">
    <property type="nucleotide sequence ID" value="XM_005203618.5"/>
</dbReference>
<dbReference type="SMR" id="Q6QRN6"/>
<dbReference type="FunCoup" id="Q6QRN6">
    <property type="interactions" value="2782"/>
</dbReference>
<dbReference type="STRING" id="9913.ENSBTAP00000069680"/>
<dbReference type="PaxDb" id="9913-ENSBTAP00000000518"/>
<dbReference type="PeptideAtlas" id="Q6QRN6"/>
<dbReference type="GeneID" id="404132"/>
<dbReference type="KEGG" id="bta:404132"/>
<dbReference type="CTD" id="128240"/>
<dbReference type="eggNOG" id="KOG2585">
    <property type="taxonomic scope" value="Eukaryota"/>
</dbReference>
<dbReference type="HOGENOM" id="CLU_024853_3_0_1"/>
<dbReference type="InParanoid" id="Q6QRN6"/>
<dbReference type="OrthoDB" id="10064708at2759"/>
<dbReference type="TreeFam" id="TF300197"/>
<dbReference type="Proteomes" id="UP000009136">
    <property type="component" value="Unplaced"/>
</dbReference>
<dbReference type="GO" id="GO:0005576">
    <property type="term" value="C:extracellular region"/>
    <property type="evidence" value="ECO:0007669"/>
    <property type="project" value="UniProtKB-SubCell"/>
</dbReference>
<dbReference type="GO" id="GO:0005739">
    <property type="term" value="C:mitochondrion"/>
    <property type="evidence" value="ECO:0000318"/>
    <property type="project" value="GO_Central"/>
</dbReference>
<dbReference type="GO" id="GO:0046872">
    <property type="term" value="F:metal ion binding"/>
    <property type="evidence" value="ECO:0007669"/>
    <property type="project" value="UniProtKB-KW"/>
</dbReference>
<dbReference type="GO" id="GO:0052856">
    <property type="term" value="F:NAD(P)HX epimerase activity"/>
    <property type="evidence" value="ECO:0000318"/>
    <property type="project" value="GO_Central"/>
</dbReference>
<dbReference type="GO" id="GO:0000166">
    <property type="term" value="F:nucleotide binding"/>
    <property type="evidence" value="ECO:0007669"/>
    <property type="project" value="UniProtKB-KW"/>
</dbReference>
<dbReference type="GO" id="GO:0006869">
    <property type="term" value="P:lipid transport"/>
    <property type="evidence" value="ECO:0007669"/>
    <property type="project" value="UniProtKB-KW"/>
</dbReference>
<dbReference type="GO" id="GO:0031580">
    <property type="term" value="P:membrane raft distribution"/>
    <property type="evidence" value="ECO:0000250"/>
    <property type="project" value="UniProtKB"/>
</dbReference>
<dbReference type="GO" id="GO:0016525">
    <property type="term" value="P:negative regulation of angiogenesis"/>
    <property type="evidence" value="ECO:0000250"/>
    <property type="project" value="UniProtKB"/>
</dbReference>
<dbReference type="GO" id="GO:0046496">
    <property type="term" value="P:nicotinamide nucleotide metabolic process"/>
    <property type="evidence" value="ECO:0000250"/>
    <property type="project" value="UniProtKB"/>
</dbReference>
<dbReference type="GO" id="GO:0010874">
    <property type="term" value="P:regulation of cholesterol efflux"/>
    <property type="evidence" value="ECO:0000250"/>
    <property type="project" value="UniProtKB"/>
</dbReference>
<dbReference type="GO" id="GO:0002040">
    <property type="term" value="P:sprouting angiogenesis"/>
    <property type="evidence" value="ECO:0000250"/>
    <property type="project" value="UniProtKB"/>
</dbReference>
<dbReference type="FunFam" id="3.40.50.10260:FF:000002">
    <property type="entry name" value="NAD(P)H-hydrate epimerase"/>
    <property type="match status" value="1"/>
</dbReference>
<dbReference type="Gene3D" id="3.40.50.10260">
    <property type="entry name" value="YjeF N-terminal domain"/>
    <property type="match status" value="1"/>
</dbReference>
<dbReference type="HAMAP" id="MF_01966">
    <property type="entry name" value="NADHX_epimerase"/>
    <property type="match status" value="1"/>
</dbReference>
<dbReference type="InterPro" id="IPR004443">
    <property type="entry name" value="YjeF_N_dom"/>
</dbReference>
<dbReference type="InterPro" id="IPR036652">
    <property type="entry name" value="YjeF_N_dom_sf"/>
</dbReference>
<dbReference type="InterPro" id="IPR032976">
    <property type="entry name" value="YJEFN_prot_NAXE-like"/>
</dbReference>
<dbReference type="NCBIfam" id="TIGR00197">
    <property type="entry name" value="yjeF_nterm"/>
    <property type="match status" value="1"/>
</dbReference>
<dbReference type="PANTHER" id="PTHR13232">
    <property type="entry name" value="NAD(P)H-HYDRATE EPIMERASE"/>
    <property type="match status" value="1"/>
</dbReference>
<dbReference type="PANTHER" id="PTHR13232:SF11">
    <property type="entry name" value="NAD(P)H-HYDRATE EPIMERASE"/>
    <property type="match status" value="1"/>
</dbReference>
<dbReference type="Pfam" id="PF03853">
    <property type="entry name" value="YjeF_N"/>
    <property type="match status" value="1"/>
</dbReference>
<dbReference type="SUPFAM" id="SSF64153">
    <property type="entry name" value="YjeF N-terminal domain-like"/>
    <property type="match status" value="1"/>
</dbReference>
<dbReference type="PROSITE" id="PS51385">
    <property type="entry name" value="YJEF_N"/>
    <property type="match status" value="1"/>
</dbReference>
<reference key="1">
    <citation type="journal article" date="2004" name="Mol. Reprod. Dev.">
        <title>Identification of differentially regulated genes in bovine blastocysts using an annealing control primer system.</title>
        <authorList>
            <person name="Hwang K.-C."/>
            <person name="Cui X.-S."/>
            <person name="Park S.-P."/>
            <person name="Shin M.-R."/>
            <person name="Park S.-Y."/>
            <person name="Kim E.-Y."/>
            <person name="Kim N.-H."/>
        </authorList>
    </citation>
    <scope>NUCLEOTIDE SEQUENCE [MRNA]</scope>
    <source>
        <tissue>Blastocyst</tissue>
    </source>
</reference>
<reference key="2">
    <citation type="submission" date="2006-04" db="EMBL/GenBank/DDBJ databases">
        <authorList>
            <consortium name="NIH - Mammalian Gene Collection (MGC) project"/>
        </authorList>
    </citation>
    <scope>NUCLEOTIDE SEQUENCE [LARGE SCALE MRNA]</scope>
    <source>
        <strain>Hereford</strain>
        <tissue>Thymus</tissue>
    </source>
</reference>
<protein>
    <recommendedName>
        <fullName evidence="3">NAD(P)H-hydrate epimerase</fullName>
        <ecNumber evidence="2">5.1.99.6</ecNumber>
    </recommendedName>
    <alternativeName>
        <fullName evidence="3">Apolipoprotein A-I-binding protein</fullName>
        <shortName evidence="3">AI-BP</shortName>
    </alternativeName>
    <alternativeName>
        <fullName evidence="2">NAD(P)HX epimerase</fullName>
    </alternativeName>
</protein>
<accession>Q6QRN6</accession>
<proteinExistence type="evidence at transcript level"/>
<sequence length="288" mass="31363">MSGLRALLGLGLLVAGSRLSRVRVQAGSCRAGATWWVPQRLISGGRGDSEVMASSAVKYLSQEEAQAVDQELFNEYQFSVDQLMELAGLSCATAIAKAYPPTSLSRSPPTVLVICGPGNNGGDGLVCARHLKLFGYQPTIYYPKRPNKPLFTALVTQCQKMDIPFLGEMPPEPMLIDELYELVVDAIFGFSFTGEVREPFRSILSVLNGLTVPIASIDIPSGWDVEKGSSGGIQPDLLISLTAPKKSATQFTGRYHYLGGRFVPPALEKKYQLNLPPYPDTECVYRLQ</sequence>
<keyword id="KW-0413">Isomerase</keyword>
<keyword id="KW-0445">Lipid transport</keyword>
<keyword id="KW-0479">Metal-binding</keyword>
<keyword id="KW-0496">Mitochondrion</keyword>
<keyword id="KW-0520">NAD</keyword>
<keyword id="KW-0521">NADP</keyword>
<keyword id="KW-0547">Nucleotide-binding</keyword>
<keyword id="KW-0597">Phosphoprotein</keyword>
<keyword id="KW-0630">Potassium</keyword>
<keyword id="KW-1185">Reference proteome</keyword>
<keyword id="KW-0964">Secreted</keyword>
<keyword id="KW-0809">Transit peptide</keyword>
<keyword id="KW-0813">Transport</keyword>
<evidence type="ECO:0000250" key="1">
    <source>
        <dbReference type="UniProtKB" id="Q8K4Z3"/>
    </source>
</evidence>
<evidence type="ECO:0000250" key="2">
    <source>
        <dbReference type="UniProtKB" id="Q8NCW5"/>
    </source>
</evidence>
<evidence type="ECO:0000255" key="3">
    <source>
        <dbReference type="HAMAP-Rule" id="MF_03159"/>
    </source>
</evidence>
<name>NNRE_BOVIN</name>
<feature type="transit peptide" description="Mitochondrion" evidence="3">
    <location>
        <begin position="1"/>
        <end position="32"/>
    </location>
</feature>
<feature type="chain" id="PRO_0000292422" description="NAD(P)H-hydrate epimerase">
    <location>
        <begin position="33"/>
        <end position="288"/>
    </location>
</feature>
<feature type="domain" description="YjeF N-terminal" evidence="3">
    <location>
        <begin position="65"/>
        <end position="275"/>
    </location>
</feature>
<feature type="binding site" evidence="3">
    <location>
        <begin position="119"/>
        <end position="123"/>
    </location>
    <ligand>
        <name>(6S)-NADPHX</name>
        <dbReference type="ChEBI" id="CHEBI:64076"/>
    </ligand>
</feature>
<feature type="binding site" evidence="3">
    <location>
        <position position="120"/>
    </location>
    <ligand>
        <name>K(+)</name>
        <dbReference type="ChEBI" id="CHEBI:29103"/>
    </ligand>
</feature>
<feature type="binding site" evidence="3">
    <location>
        <position position="185"/>
    </location>
    <ligand>
        <name>K(+)</name>
        <dbReference type="ChEBI" id="CHEBI:29103"/>
    </ligand>
</feature>
<feature type="binding site" evidence="3">
    <location>
        <begin position="189"/>
        <end position="195"/>
    </location>
    <ligand>
        <name>(6S)-NADPHX</name>
        <dbReference type="ChEBI" id="CHEBI:64076"/>
    </ligand>
</feature>
<feature type="binding site" evidence="3">
    <location>
        <position position="218"/>
    </location>
    <ligand>
        <name>(6S)-NADPHX</name>
        <dbReference type="ChEBI" id="CHEBI:64076"/>
    </ligand>
</feature>
<feature type="binding site" evidence="3">
    <location>
        <position position="221"/>
    </location>
    <ligand>
        <name>K(+)</name>
        <dbReference type="ChEBI" id="CHEBI:29103"/>
    </ligand>
</feature>
<feature type="modified residue" description="Phosphoserine" evidence="1">
    <location>
        <position position="49"/>
    </location>
</feature>
<feature type="modified residue" description="N6-succinyllysine" evidence="1">
    <location>
        <position position="144"/>
    </location>
</feature>
<comment type="function">
    <text evidence="2 3">Catalyzes the epimerization of the S- and R-forms of NAD(P)HX, a damaged form of NAD(P)H that is a result of enzymatic or heat-dependent hydration. This is a prerequisite for the S-specific NAD(P)H-hydrate dehydratase to allow the repair of both epimers of NAD(P)HX. Accelerates cholesterol efflux from endothelial cells to high-density lipoprotein (HDL) and thereby regulates angiogenesis (By similarity).</text>
</comment>
<comment type="catalytic activity">
    <reaction evidence="2">
        <text>(6R)-NADHX = (6S)-NADHX</text>
        <dbReference type="Rhea" id="RHEA:32215"/>
        <dbReference type="ChEBI" id="CHEBI:64074"/>
        <dbReference type="ChEBI" id="CHEBI:64075"/>
        <dbReference type="EC" id="5.1.99.6"/>
    </reaction>
</comment>
<comment type="catalytic activity">
    <reaction evidence="2">
        <text>(6R)-NADPHX = (6S)-NADPHX</text>
        <dbReference type="Rhea" id="RHEA:32227"/>
        <dbReference type="ChEBI" id="CHEBI:64076"/>
        <dbReference type="ChEBI" id="CHEBI:64077"/>
        <dbReference type="EC" id="5.1.99.6"/>
    </reaction>
</comment>
<comment type="cofactor">
    <cofactor evidence="3">
        <name>K(+)</name>
        <dbReference type="ChEBI" id="CHEBI:29103"/>
    </cofactor>
    <text evidence="3">Binds 1 potassium ion per subunit.</text>
</comment>
<comment type="subunit">
    <text evidence="1 2">Homodimer (By similarity). Interacts with APOA1 and APOA2 (By similarity).</text>
</comment>
<comment type="subcellular location">
    <subcellularLocation>
        <location evidence="3">Mitochondrion</location>
    </subcellularLocation>
    <subcellularLocation>
        <location evidence="3">Secreted</location>
    </subcellularLocation>
    <text evidence="3">In sperm, secretion gradually increases during capacitation.</text>
</comment>
<comment type="PTM">
    <text evidence="3">Undergoes physiological phosphorylation during sperm capacitation, downstream to PKA activation.</text>
</comment>
<comment type="similarity">
    <text evidence="3">Belongs to the NnrE/AIBP family.</text>
</comment>
<organism>
    <name type="scientific">Bos taurus</name>
    <name type="common">Bovine</name>
    <dbReference type="NCBI Taxonomy" id="9913"/>
    <lineage>
        <taxon>Eukaryota</taxon>
        <taxon>Metazoa</taxon>
        <taxon>Chordata</taxon>
        <taxon>Craniata</taxon>
        <taxon>Vertebrata</taxon>
        <taxon>Euteleostomi</taxon>
        <taxon>Mammalia</taxon>
        <taxon>Eutheria</taxon>
        <taxon>Laurasiatheria</taxon>
        <taxon>Artiodactyla</taxon>
        <taxon>Ruminantia</taxon>
        <taxon>Pecora</taxon>
        <taxon>Bovidae</taxon>
        <taxon>Bovinae</taxon>
        <taxon>Bos</taxon>
    </lineage>
</organism>